<name>UPP_MESFL</name>
<comment type="function">
    <text evidence="1">Catalyzes the conversion of uracil and 5-phospho-alpha-D-ribose 1-diphosphate (PRPP) to UMP and diphosphate.</text>
</comment>
<comment type="catalytic activity">
    <reaction evidence="1">
        <text>UMP + diphosphate = 5-phospho-alpha-D-ribose 1-diphosphate + uracil</text>
        <dbReference type="Rhea" id="RHEA:13017"/>
        <dbReference type="ChEBI" id="CHEBI:17568"/>
        <dbReference type="ChEBI" id="CHEBI:33019"/>
        <dbReference type="ChEBI" id="CHEBI:57865"/>
        <dbReference type="ChEBI" id="CHEBI:58017"/>
        <dbReference type="EC" id="2.4.2.9"/>
    </reaction>
</comment>
<comment type="cofactor">
    <cofactor evidence="1">
        <name>Mg(2+)</name>
        <dbReference type="ChEBI" id="CHEBI:18420"/>
    </cofactor>
    <text evidence="1">Binds 1 Mg(2+) ion per subunit. The magnesium is bound as Mg-PRPP.</text>
</comment>
<comment type="activity regulation">
    <text evidence="1">Allosterically activated by GTP.</text>
</comment>
<comment type="pathway">
    <text evidence="1">Pyrimidine metabolism; UMP biosynthesis via salvage pathway; UMP from uracil: step 1/1.</text>
</comment>
<comment type="similarity">
    <text evidence="1">Belongs to the UPRTase family.</text>
</comment>
<accession>Q6F210</accession>
<protein>
    <recommendedName>
        <fullName evidence="1">Uracil phosphoribosyltransferase</fullName>
        <ecNumber evidence="1">2.4.2.9</ecNumber>
    </recommendedName>
    <alternativeName>
        <fullName evidence="1">UMP pyrophosphorylase</fullName>
    </alternativeName>
    <alternativeName>
        <fullName evidence="1">UPRTase</fullName>
    </alternativeName>
</protein>
<reference key="1">
    <citation type="submission" date="2004-06" db="EMBL/GenBank/DDBJ databases">
        <authorList>
            <person name="Birren B.W."/>
            <person name="Stange-Thomann N."/>
            <person name="Hafez N."/>
            <person name="DeCaprio D."/>
            <person name="Fisher S."/>
            <person name="Butler J."/>
            <person name="Elkins T."/>
            <person name="Kodira C.D."/>
            <person name="Major J."/>
            <person name="Wang S."/>
            <person name="Nicol R."/>
            <person name="Nusbaum C."/>
        </authorList>
    </citation>
    <scope>NUCLEOTIDE SEQUENCE [LARGE SCALE GENOMIC DNA]</scope>
    <source>
        <strain>ATCC 33453 / NBRC 100688 / NCTC 11704 / L1</strain>
    </source>
</reference>
<dbReference type="EC" id="2.4.2.9" evidence="1"/>
<dbReference type="EMBL" id="AE017263">
    <property type="protein sequence ID" value="AAT75463.1"/>
    <property type="molecule type" value="Genomic_DNA"/>
</dbReference>
<dbReference type="RefSeq" id="WP_011183004.1">
    <property type="nucleotide sequence ID" value="NC_006055.1"/>
</dbReference>
<dbReference type="RefSeq" id="YP_053347.1">
    <property type="nucleotide sequence ID" value="NC_006055.1"/>
</dbReference>
<dbReference type="SMR" id="Q6F210"/>
<dbReference type="STRING" id="265311.Mfl107"/>
<dbReference type="PaxDb" id="265311-Mfl107"/>
<dbReference type="EnsemblBacteria" id="AAT75463">
    <property type="protein sequence ID" value="AAT75463"/>
    <property type="gene ID" value="Mfl107"/>
</dbReference>
<dbReference type="GeneID" id="2897596"/>
<dbReference type="KEGG" id="mfl:Mfl107"/>
<dbReference type="PATRIC" id="fig|265311.5.peg.108"/>
<dbReference type="eggNOG" id="COG0035">
    <property type="taxonomic scope" value="Bacteria"/>
</dbReference>
<dbReference type="HOGENOM" id="CLU_067096_2_2_14"/>
<dbReference type="OrthoDB" id="9781675at2"/>
<dbReference type="UniPathway" id="UPA00574">
    <property type="reaction ID" value="UER00636"/>
</dbReference>
<dbReference type="Proteomes" id="UP000006647">
    <property type="component" value="Chromosome"/>
</dbReference>
<dbReference type="GO" id="GO:0005525">
    <property type="term" value="F:GTP binding"/>
    <property type="evidence" value="ECO:0007669"/>
    <property type="project" value="UniProtKB-KW"/>
</dbReference>
<dbReference type="GO" id="GO:0000287">
    <property type="term" value="F:magnesium ion binding"/>
    <property type="evidence" value="ECO:0007669"/>
    <property type="project" value="UniProtKB-UniRule"/>
</dbReference>
<dbReference type="GO" id="GO:0004845">
    <property type="term" value="F:uracil phosphoribosyltransferase activity"/>
    <property type="evidence" value="ECO:0007669"/>
    <property type="project" value="UniProtKB-UniRule"/>
</dbReference>
<dbReference type="GO" id="GO:0044206">
    <property type="term" value="P:UMP salvage"/>
    <property type="evidence" value="ECO:0007669"/>
    <property type="project" value="UniProtKB-UniRule"/>
</dbReference>
<dbReference type="GO" id="GO:0006223">
    <property type="term" value="P:uracil salvage"/>
    <property type="evidence" value="ECO:0007669"/>
    <property type="project" value="InterPro"/>
</dbReference>
<dbReference type="CDD" id="cd06223">
    <property type="entry name" value="PRTases_typeI"/>
    <property type="match status" value="1"/>
</dbReference>
<dbReference type="FunFam" id="3.40.50.2020:FF:000003">
    <property type="entry name" value="Uracil phosphoribosyltransferase"/>
    <property type="match status" value="1"/>
</dbReference>
<dbReference type="Gene3D" id="3.40.50.2020">
    <property type="match status" value="1"/>
</dbReference>
<dbReference type="HAMAP" id="MF_01218_B">
    <property type="entry name" value="Upp_B"/>
    <property type="match status" value="1"/>
</dbReference>
<dbReference type="InterPro" id="IPR000836">
    <property type="entry name" value="PRibTrfase_dom"/>
</dbReference>
<dbReference type="InterPro" id="IPR029057">
    <property type="entry name" value="PRTase-like"/>
</dbReference>
<dbReference type="InterPro" id="IPR034332">
    <property type="entry name" value="Upp_B"/>
</dbReference>
<dbReference type="InterPro" id="IPR050054">
    <property type="entry name" value="UPRTase/APRTase"/>
</dbReference>
<dbReference type="InterPro" id="IPR005765">
    <property type="entry name" value="Ura_phspho_trans"/>
</dbReference>
<dbReference type="NCBIfam" id="NF001097">
    <property type="entry name" value="PRK00129.1"/>
    <property type="match status" value="1"/>
</dbReference>
<dbReference type="NCBIfam" id="TIGR01091">
    <property type="entry name" value="upp"/>
    <property type="match status" value="1"/>
</dbReference>
<dbReference type="PANTHER" id="PTHR32315">
    <property type="entry name" value="ADENINE PHOSPHORIBOSYLTRANSFERASE"/>
    <property type="match status" value="1"/>
</dbReference>
<dbReference type="PANTHER" id="PTHR32315:SF4">
    <property type="entry name" value="URACIL PHOSPHORIBOSYLTRANSFERASE, CHLOROPLASTIC"/>
    <property type="match status" value="1"/>
</dbReference>
<dbReference type="Pfam" id="PF14681">
    <property type="entry name" value="UPRTase"/>
    <property type="match status" value="1"/>
</dbReference>
<dbReference type="SUPFAM" id="SSF53271">
    <property type="entry name" value="PRTase-like"/>
    <property type="match status" value="1"/>
</dbReference>
<sequence length="207" mass="23132">MAFTELKHPLIIDKLSRMRKKETSSKDFRENLNEIAQLMVYEIFRDLELEAIEIETPMTKTVGYTIDKPIVLVPILRAGIGMLDGIQKLIPTARIAHIGLYRDEETLEIHQYFAKKTESIDESYVIIVDPMLATGGSANKAIDIVKGWGVKNIKFVCLVAVEPGISNVLEKHPDVEIYAASKDEKLSDKGYIIPGLGDAGDRIFGTK</sequence>
<feature type="chain" id="PRO_0000120848" description="Uracil phosphoribosyltransferase">
    <location>
        <begin position="1"/>
        <end position="207"/>
    </location>
</feature>
<feature type="binding site" evidence="1">
    <location>
        <position position="77"/>
    </location>
    <ligand>
        <name>5-phospho-alpha-D-ribose 1-diphosphate</name>
        <dbReference type="ChEBI" id="CHEBI:58017"/>
    </ligand>
</feature>
<feature type="binding site" evidence="1">
    <location>
        <position position="102"/>
    </location>
    <ligand>
        <name>5-phospho-alpha-D-ribose 1-diphosphate</name>
        <dbReference type="ChEBI" id="CHEBI:58017"/>
    </ligand>
</feature>
<feature type="binding site" evidence="1">
    <location>
        <begin position="129"/>
        <end position="137"/>
    </location>
    <ligand>
        <name>5-phospho-alpha-D-ribose 1-diphosphate</name>
        <dbReference type="ChEBI" id="CHEBI:58017"/>
    </ligand>
</feature>
<feature type="binding site" evidence="1">
    <location>
        <position position="192"/>
    </location>
    <ligand>
        <name>uracil</name>
        <dbReference type="ChEBI" id="CHEBI:17568"/>
    </ligand>
</feature>
<feature type="binding site" evidence="1">
    <location>
        <begin position="197"/>
        <end position="199"/>
    </location>
    <ligand>
        <name>uracil</name>
        <dbReference type="ChEBI" id="CHEBI:17568"/>
    </ligand>
</feature>
<feature type="binding site" evidence="1">
    <location>
        <position position="198"/>
    </location>
    <ligand>
        <name>5-phospho-alpha-D-ribose 1-diphosphate</name>
        <dbReference type="ChEBI" id="CHEBI:58017"/>
    </ligand>
</feature>
<keyword id="KW-0021">Allosteric enzyme</keyword>
<keyword id="KW-0328">Glycosyltransferase</keyword>
<keyword id="KW-0342">GTP-binding</keyword>
<keyword id="KW-0460">Magnesium</keyword>
<keyword id="KW-0547">Nucleotide-binding</keyword>
<keyword id="KW-1185">Reference proteome</keyword>
<keyword id="KW-0808">Transferase</keyword>
<evidence type="ECO:0000255" key="1">
    <source>
        <dbReference type="HAMAP-Rule" id="MF_01218"/>
    </source>
</evidence>
<organism>
    <name type="scientific">Mesoplasma florum (strain ATCC 33453 / NBRC 100688 / NCTC 11704 / L1)</name>
    <name type="common">Acholeplasma florum</name>
    <dbReference type="NCBI Taxonomy" id="265311"/>
    <lineage>
        <taxon>Bacteria</taxon>
        <taxon>Bacillati</taxon>
        <taxon>Mycoplasmatota</taxon>
        <taxon>Mollicutes</taxon>
        <taxon>Entomoplasmatales</taxon>
        <taxon>Entomoplasmataceae</taxon>
        <taxon>Mesoplasma</taxon>
    </lineage>
</organism>
<proteinExistence type="inferred from homology"/>
<gene>
    <name evidence="1" type="primary">upp</name>
    <name type="ordered locus">Mfl107</name>
</gene>